<name>NST1_EREGS</name>
<feature type="chain" id="PRO_0000324438" description="Stress response protein NST1">
    <location>
        <begin position="1"/>
        <end position="1207"/>
    </location>
</feature>
<feature type="region of interest" description="Disordered" evidence="3">
    <location>
        <begin position="1"/>
        <end position="58"/>
    </location>
</feature>
<feature type="region of interest" description="Disordered" evidence="3">
    <location>
        <begin position="248"/>
        <end position="284"/>
    </location>
</feature>
<feature type="region of interest" description="Disordered" evidence="3">
    <location>
        <begin position="398"/>
        <end position="420"/>
    </location>
</feature>
<feature type="region of interest" description="Disordered" evidence="3">
    <location>
        <begin position="451"/>
        <end position="535"/>
    </location>
</feature>
<feature type="region of interest" description="Disordered" evidence="3">
    <location>
        <begin position="586"/>
        <end position="735"/>
    </location>
</feature>
<feature type="region of interest" description="Disordered" evidence="3">
    <location>
        <begin position="1124"/>
        <end position="1148"/>
    </location>
</feature>
<feature type="region of interest" description="Disordered" evidence="3">
    <location>
        <begin position="1163"/>
        <end position="1183"/>
    </location>
</feature>
<feature type="coiled-coil region" evidence="2">
    <location>
        <begin position="564"/>
        <end position="727"/>
    </location>
</feature>
<feature type="compositionally biased region" description="Polar residues" evidence="3">
    <location>
        <begin position="7"/>
        <end position="16"/>
    </location>
</feature>
<feature type="compositionally biased region" description="Basic residues" evidence="3">
    <location>
        <begin position="25"/>
        <end position="36"/>
    </location>
</feature>
<feature type="compositionally biased region" description="Low complexity" evidence="3">
    <location>
        <begin position="252"/>
        <end position="262"/>
    </location>
</feature>
<feature type="compositionally biased region" description="Acidic residues" evidence="3">
    <location>
        <begin position="469"/>
        <end position="507"/>
    </location>
</feature>
<feature type="compositionally biased region" description="Basic residues" evidence="3">
    <location>
        <begin position="511"/>
        <end position="523"/>
    </location>
</feature>
<feature type="compositionally biased region" description="Basic and acidic residues" evidence="3">
    <location>
        <begin position="586"/>
        <end position="721"/>
    </location>
</feature>
<feature type="compositionally biased region" description="Low complexity" evidence="3">
    <location>
        <begin position="1163"/>
        <end position="1176"/>
    </location>
</feature>
<reference key="1">
    <citation type="journal article" date="2004" name="Science">
        <title>The Ashbya gossypii genome as a tool for mapping the ancient Saccharomyces cerevisiae genome.</title>
        <authorList>
            <person name="Dietrich F.S."/>
            <person name="Voegeli S."/>
            <person name="Brachat S."/>
            <person name="Lerch A."/>
            <person name="Gates K."/>
            <person name="Steiner S."/>
            <person name="Mohr C."/>
            <person name="Poehlmann R."/>
            <person name="Luedi P."/>
            <person name="Choi S."/>
            <person name="Wing R.A."/>
            <person name="Flavier A."/>
            <person name="Gaffney T.D."/>
            <person name="Philippsen P."/>
        </authorList>
    </citation>
    <scope>NUCLEOTIDE SEQUENCE [LARGE SCALE GENOMIC DNA]</scope>
    <source>
        <strain>ATCC 10895 / CBS 109.51 / FGSC 9923 / NRRL Y-1056</strain>
    </source>
</reference>
<reference key="2">
    <citation type="journal article" date="2013" name="G3 (Bethesda)">
        <title>Genomes of Ashbya fungi isolated from insects reveal four mating-type loci, numerous translocations, lack of transposons, and distinct gene duplications.</title>
        <authorList>
            <person name="Dietrich F.S."/>
            <person name="Voegeli S."/>
            <person name="Kuo S."/>
            <person name="Philippsen P."/>
        </authorList>
    </citation>
    <scope>GENOME REANNOTATION</scope>
    <scope>SEQUENCE REVISION TO 201 AND 499</scope>
    <source>
        <strain>ATCC 10895 / CBS 109.51 / FGSC 9923 / NRRL Y-1056</strain>
    </source>
</reference>
<evidence type="ECO:0000250" key="1"/>
<evidence type="ECO:0000255" key="2"/>
<evidence type="ECO:0000256" key="3">
    <source>
        <dbReference type="SAM" id="MobiDB-lite"/>
    </source>
</evidence>
<evidence type="ECO:0000305" key="4"/>
<sequence length="1207" mass="135557">MGLDNPTVVTGQNVQFSYDMASSSKKSRNKKKKSKPSIKEPQSAPLLAVETESVEETHPQAELYDSEADYPSSRVIRRAANGDVIVESLNEAGSGVQAQQAQQQKHSAISSKLVAHWESLSPEEKRKILSISKEEVFSVTKSYQTLHNCNCTVCGRRHVPMEQELESIYNQLYEMARQDNPNSDFVLFHLNLIKELQRGTSSGAEQRTASLQSRGASFLDNMRDEAVKYCISNEGVDRLKEEVLQFKHNKQRQYSEQQRKQQLPPVHTHNSPSDSPSIDELPEREQESLLHTLPDELGPDSSEVNEQLREKYLKFAKTFVSSHPKIAQEYVNRMMMYPDMRALTEDLIKNNGQDFVKAMEAFVSSQQDGPLPGSPEHTKLTAEQFQELQKQLVEKAGLDMSQSPVPTNDDPPQDCTDTDEIDTDLRGRVLLKQFMAGESIINQAFKSLQGSNKNQLKKSVSHSSQGLPEDSEYDEDLNYSDSYDDEDSPYDDDVYDDNDAESYDEDDDSHHKHHHQQHLHHHHREQDAEADDYDSDIDQQERLEEGRGLIQIAITKLLQRKLIVSYQEKQAERNRERLLLELEAEEQQKKEKEEKKLKKKEKEKEKKRQMQLAKEEEKRKQVEEEARLKQEAEAREMQRRENQRKKVEEAKRKKDLEMRKRLEEQRRREEEQERQRRMKEEIKRKRDQERKQREEEQRKRKQEKELKKLQSLEVKKKREEDDKPTEESSQEDNLHKENISHDLLNQLAHPAGGVPYGIVPVKQEMSEEKTVNDDIFNMINEATSKSISTSKSISTSPSHFNALLQKGIPRKSIDTSSIGLNYASAQAALPQPLSFPVDLTEALGFAQKTQVQTSISGPPGLSKNTAASSWDNVPGYVQLSPKSVTQNHSNVQVQTTPHGSVPGQHRASYSTFGASVDPNDTFSGDLTNLTNFLVQTKLEDVSTSAPLHSVSSSTTALPRGETSIYGNNLWNNEQPHIGSLISSHASGPSTQAPLHPRRSIWDNNASVNNYAADLWGNTSSNSTPIAPSTAVASSMVSAHQASATDVIIQAYTLLSTSGGFVPIDVLYQNCLSYLTDKGSFTFGQFVGQLLALRNANECEVLSNDVGMMTHCRFTTPQLQSTLYAPAAAPGGSDLPPRQPSKGLFSDPVSTSTVGLTTIPVLSTSTGSTSSATPTGSIALGQPSSGQSNFFDFNQQLAQPSRANNIWG</sequence>
<proteinExistence type="inferred from homology"/>
<organism>
    <name type="scientific">Eremothecium gossypii (strain ATCC 10895 / CBS 109.51 / FGSC 9923 / NRRL Y-1056)</name>
    <name type="common">Yeast</name>
    <name type="synonym">Ashbya gossypii</name>
    <dbReference type="NCBI Taxonomy" id="284811"/>
    <lineage>
        <taxon>Eukaryota</taxon>
        <taxon>Fungi</taxon>
        <taxon>Dikarya</taxon>
        <taxon>Ascomycota</taxon>
        <taxon>Saccharomycotina</taxon>
        <taxon>Saccharomycetes</taxon>
        <taxon>Saccharomycetales</taxon>
        <taxon>Saccharomycetaceae</taxon>
        <taxon>Eremothecium</taxon>
    </lineage>
</organism>
<protein>
    <recommendedName>
        <fullName>Stress response protein NST1</fullName>
    </recommendedName>
</protein>
<keyword id="KW-0175">Coiled coil</keyword>
<keyword id="KW-0963">Cytoplasm</keyword>
<keyword id="KW-1185">Reference proteome</keyword>
<keyword id="KW-0346">Stress response</keyword>
<dbReference type="EMBL" id="AE016816">
    <property type="protein sequence ID" value="AAS51142.2"/>
    <property type="molecule type" value="Genomic_DNA"/>
</dbReference>
<dbReference type="RefSeq" id="NP_983318.2">
    <property type="nucleotide sequence ID" value="NM_208671.2"/>
</dbReference>
<dbReference type="SMR" id="Q75CK5"/>
<dbReference type="FunCoup" id="Q75CK5">
    <property type="interactions" value="26"/>
</dbReference>
<dbReference type="EnsemblFungi" id="AAS51142">
    <property type="protein sequence ID" value="AAS51142"/>
    <property type="gene ID" value="AGOS_ACL086C"/>
</dbReference>
<dbReference type="GeneID" id="4619438"/>
<dbReference type="KEGG" id="ago:AGOS_ACL086C"/>
<dbReference type="eggNOG" id="ENOG502QSSK">
    <property type="taxonomic scope" value="Eukaryota"/>
</dbReference>
<dbReference type="HOGENOM" id="CLU_267374_0_0_1"/>
<dbReference type="InParanoid" id="Q75CK5"/>
<dbReference type="OMA" id="SCACKYC"/>
<dbReference type="OrthoDB" id="21629at2759"/>
<dbReference type="Proteomes" id="UP000000591">
    <property type="component" value="Chromosome III"/>
</dbReference>
<dbReference type="GO" id="GO:0000932">
    <property type="term" value="C:P-body"/>
    <property type="evidence" value="ECO:0007669"/>
    <property type="project" value="EnsemblFungi"/>
</dbReference>
<dbReference type="GO" id="GO:0017148">
    <property type="term" value="P:negative regulation of translation"/>
    <property type="evidence" value="ECO:0007669"/>
    <property type="project" value="EnsemblFungi"/>
</dbReference>
<dbReference type="GO" id="GO:0009651">
    <property type="term" value="P:response to salt stress"/>
    <property type="evidence" value="ECO:0007669"/>
    <property type="project" value="EnsemblFungi"/>
</dbReference>
<dbReference type="InterPro" id="IPR025279">
    <property type="entry name" value="NST1"/>
</dbReference>
<dbReference type="Pfam" id="PF13945">
    <property type="entry name" value="NST1"/>
    <property type="match status" value="1"/>
</dbReference>
<gene>
    <name type="primary">NST1</name>
    <name type="ordered locus">ACL086C</name>
</gene>
<accession>Q75CK5</accession>
<comment type="function">
    <text evidence="1">May act as a negative regulator of salt tolerance.</text>
</comment>
<comment type="subcellular location">
    <subcellularLocation>
        <location evidence="1">Cytoplasm</location>
    </subcellularLocation>
</comment>
<comment type="similarity">
    <text evidence="4">Belongs to the NST1 family.</text>
</comment>